<reference key="1">
    <citation type="journal article" date="2002" name="Proc. Natl. Acad. Sci. U.S.A.">
        <title>Complete genome sequence of Clostridium perfringens, an anaerobic flesh-eater.</title>
        <authorList>
            <person name="Shimizu T."/>
            <person name="Ohtani K."/>
            <person name="Hirakawa H."/>
            <person name="Ohshima K."/>
            <person name="Yamashita A."/>
            <person name="Shiba T."/>
            <person name="Ogasawara N."/>
            <person name="Hattori M."/>
            <person name="Kuhara S."/>
            <person name="Hayashi H."/>
        </authorList>
    </citation>
    <scope>NUCLEOTIDE SEQUENCE [LARGE SCALE GENOMIC DNA]</scope>
    <source>
        <strain>13 / Type A</strain>
    </source>
</reference>
<evidence type="ECO:0000255" key="1">
    <source>
        <dbReference type="HAMAP-Rule" id="MF_00741"/>
    </source>
</evidence>
<accession>Q8XMK4</accession>
<feature type="chain" id="PRO_0000148206" description="Phosphoribosylformylglycinamidine cyclo-ligase">
    <location>
        <begin position="1"/>
        <end position="333"/>
    </location>
</feature>
<keyword id="KW-0067">ATP-binding</keyword>
<keyword id="KW-0963">Cytoplasm</keyword>
<keyword id="KW-0436">Ligase</keyword>
<keyword id="KW-0547">Nucleotide-binding</keyword>
<keyword id="KW-0658">Purine biosynthesis</keyword>
<keyword id="KW-1185">Reference proteome</keyword>
<organism>
    <name type="scientific">Clostridium perfringens (strain 13 / Type A)</name>
    <dbReference type="NCBI Taxonomy" id="195102"/>
    <lineage>
        <taxon>Bacteria</taxon>
        <taxon>Bacillati</taxon>
        <taxon>Bacillota</taxon>
        <taxon>Clostridia</taxon>
        <taxon>Eubacteriales</taxon>
        <taxon>Clostridiaceae</taxon>
        <taxon>Clostridium</taxon>
    </lineage>
</organism>
<gene>
    <name evidence="1" type="primary">purM</name>
    <name type="ordered locus">CPE0684</name>
</gene>
<protein>
    <recommendedName>
        <fullName evidence="1">Phosphoribosylformylglycinamidine cyclo-ligase</fullName>
        <ecNumber evidence="1">6.3.3.1</ecNumber>
    </recommendedName>
    <alternativeName>
        <fullName evidence="1">AIR synthase</fullName>
    </alternativeName>
    <alternativeName>
        <fullName evidence="1">AIRS</fullName>
    </alternativeName>
    <alternativeName>
        <fullName evidence="1">Phosphoribosyl-aminoimidazole synthetase</fullName>
    </alternativeName>
</protein>
<name>PUR5_CLOPE</name>
<sequence length="333" mass="36453">MLTYKEAGVNIEEGYRSVKLIKEYAKKTMSEYVLNGLGSFAGMIELPEGYKKPVLVSGTDGVGTKLDIACKKRKFDTVGIDCVAMCVNDILCHGAKPLFFLDYIACGKLEAEVSSDLVKGVAEGCIKSQCSLIGGETAEMPGMYKEGDYDIAGFAVGIVDKDKIINGKDIKSGDKLIGIASSGVHSNGYSLIRKVFKNLDEDFNGKAIWEELLTPTKIYVKPVLSLLEKFNIKGMAHVTGGGFYENLPRMLSKEGLSIVINKNSYEIPEIFKKLMELGVKEEEMYNTFNMGIGFVLCVEEDEVEEVLKELSKQGEKAFEIGYINAGGEGVCIK</sequence>
<proteinExistence type="inferred from homology"/>
<dbReference type="EC" id="6.3.3.1" evidence="1"/>
<dbReference type="EMBL" id="BA000016">
    <property type="protein sequence ID" value="BAB80390.1"/>
    <property type="molecule type" value="Genomic_DNA"/>
</dbReference>
<dbReference type="RefSeq" id="WP_011009970.1">
    <property type="nucleotide sequence ID" value="NC_003366.1"/>
</dbReference>
<dbReference type="SMR" id="Q8XMK4"/>
<dbReference type="STRING" id="195102.gene:10489945"/>
<dbReference type="KEGG" id="cpe:CPE0684"/>
<dbReference type="HOGENOM" id="CLU_047116_0_0_9"/>
<dbReference type="UniPathway" id="UPA00074">
    <property type="reaction ID" value="UER00129"/>
</dbReference>
<dbReference type="Proteomes" id="UP000000818">
    <property type="component" value="Chromosome"/>
</dbReference>
<dbReference type="GO" id="GO:0005829">
    <property type="term" value="C:cytosol"/>
    <property type="evidence" value="ECO:0007669"/>
    <property type="project" value="TreeGrafter"/>
</dbReference>
<dbReference type="GO" id="GO:0005524">
    <property type="term" value="F:ATP binding"/>
    <property type="evidence" value="ECO:0007669"/>
    <property type="project" value="UniProtKB-KW"/>
</dbReference>
<dbReference type="GO" id="GO:0004637">
    <property type="term" value="F:phosphoribosylamine-glycine ligase activity"/>
    <property type="evidence" value="ECO:0007669"/>
    <property type="project" value="TreeGrafter"/>
</dbReference>
<dbReference type="GO" id="GO:0004641">
    <property type="term" value="F:phosphoribosylformylglycinamidine cyclo-ligase activity"/>
    <property type="evidence" value="ECO:0007669"/>
    <property type="project" value="UniProtKB-UniRule"/>
</dbReference>
<dbReference type="GO" id="GO:0006189">
    <property type="term" value="P:'de novo' IMP biosynthetic process"/>
    <property type="evidence" value="ECO:0007669"/>
    <property type="project" value="UniProtKB-UniRule"/>
</dbReference>
<dbReference type="GO" id="GO:0046084">
    <property type="term" value="P:adenine biosynthetic process"/>
    <property type="evidence" value="ECO:0007669"/>
    <property type="project" value="TreeGrafter"/>
</dbReference>
<dbReference type="CDD" id="cd02196">
    <property type="entry name" value="PurM"/>
    <property type="match status" value="1"/>
</dbReference>
<dbReference type="FunFam" id="3.30.1330.10:FF:000001">
    <property type="entry name" value="Phosphoribosylformylglycinamidine cyclo-ligase"/>
    <property type="match status" value="1"/>
</dbReference>
<dbReference type="FunFam" id="3.90.650.10:FF:000011">
    <property type="entry name" value="Phosphoribosylformylglycinamidine cyclo-ligase"/>
    <property type="match status" value="1"/>
</dbReference>
<dbReference type="Gene3D" id="3.90.650.10">
    <property type="entry name" value="PurM-like C-terminal domain"/>
    <property type="match status" value="1"/>
</dbReference>
<dbReference type="Gene3D" id="3.30.1330.10">
    <property type="entry name" value="PurM-like, N-terminal domain"/>
    <property type="match status" value="1"/>
</dbReference>
<dbReference type="HAMAP" id="MF_00741">
    <property type="entry name" value="AIRS"/>
    <property type="match status" value="1"/>
</dbReference>
<dbReference type="InterPro" id="IPR010918">
    <property type="entry name" value="PurM-like_C_dom"/>
</dbReference>
<dbReference type="InterPro" id="IPR036676">
    <property type="entry name" value="PurM-like_C_sf"/>
</dbReference>
<dbReference type="InterPro" id="IPR016188">
    <property type="entry name" value="PurM-like_N"/>
</dbReference>
<dbReference type="InterPro" id="IPR036921">
    <property type="entry name" value="PurM-like_N_sf"/>
</dbReference>
<dbReference type="InterPro" id="IPR004733">
    <property type="entry name" value="PurM_cligase"/>
</dbReference>
<dbReference type="NCBIfam" id="TIGR00878">
    <property type="entry name" value="purM"/>
    <property type="match status" value="1"/>
</dbReference>
<dbReference type="PANTHER" id="PTHR10520:SF12">
    <property type="entry name" value="TRIFUNCTIONAL PURINE BIOSYNTHETIC PROTEIN ADENOSINE-3"/>
    <property type="match status" value="1"/>
</dbReference>
<dbReference type="PANTHER" id="PTHR10520">
    <property type="entry name" value="TRIFUNCTIONAL PURINE BIOSYNTHETIC PROTEIN ADENOSINE-3-RELATED"/>
    <property type="match status" value="1"/>
</dbReference>
<dbReference type="Pfam" id="PF00586">
    <property type="entry name" value="AIRS"/>
    <property type="match status" value="1"/>
</dbReference>
<dbReference type="Pfam" id="PF02769">
    <property type="entry name" value="AIRS_C"/>
    <property type="match status" value="1"/>
</dbReference>
<dbReference type="SUPFAM" id="SSF56042">
    <property type="entry name" value="PurM C-terminal domain-like"/>
    <property type="match status" value="1"/>
</dbReference>
<dbReference type="SUPFAM" id="SSF55326">
    <property type="entry name" value="PurM N-terminal domain-like"/>
    <property type="match status" value="1"/>
</dbReference>
<comment type="catalytic activity">
    <reaction evidence="1">
        <text>2-formamido-N(1)-(5-O-phospho-beta-D-ribosyl)acetamidine + ATP = 5-amino-1-(5-phospho-beta-D-ribosyl)imidazole + ADP + phosphate + H(+)</text>
        <dbReference type="Rhea" id="RHEA:23032"/>
        <dbReference type="ChEBI" id="CHEBI:15378"/>
        <dbReference type="ChEBI" id="CHEBI:30616"/>
        <dbReference type="ChEBI" id="CHEBI:43474"/>
        <dbReference type="ChEBI" id="CHEBI:137981"/>
        <dbReference type="ChEBI" id="CHEBI:147287"/>
        <dbReference type="ChEBI" id="CHEBI:456216"/>
        <dbReference type="EC" id="6.3.3.1"/>
    </reaction>
</comment>
<comment type="pathway">
    <text evidence="1">Purine metabolism; IMP biosynthesis via de novo pathway; 5-amino-1-(5-phospho-D-ribosyl)imidazole from N(2)-formyl-N(1)-(5-phospho-D-ribosyl)glycinamide: step 2/2.</text>
</comment>
<comment type="subcellular location">
    <subcellularLocation>
        <location evidence="1">Cytoplasm</location>
    </subcellularLocation>
</comment>
<comment type="similarity">
    <text evidence="1">Belongs to the AIR synthase family.</text>
</comment>